<dbReference type="EMBL" id="CP000727">
    <property type="protein sequence ID" value="ABS38709.1"/>
    <property type="molecule type" value="Genomic_DNA"/>
</dbReference>
<dbReference type="EMBL" id="AM412317">
    <property type="protein sequence ID" value="CAL85015.1"/>
    <property type="molecule type" value="Genomic_DNA"/>
</dbReference>
<dbReference type="RefSeq" id="WP_003357564.1">
    <property type="nucleotide sequence ID" value="NC_009698.1"/>
</dbReference>
<dbReference type="RefSeq" id="YP_001255936.1">
    <property type="nucleotide sequence ID" value="NC_009495.1"/>
</dbReference>
<dbReference type="RefSeq" id="YP_001389177.1">
    <property type="nucleotide sequence ID" value="NC_009698.1"/>
</dbReference>
<dbReference type="SMR" id="A5I7I0"/>
<dbReference type="GeneID" id="92940224"/>
<dbReference type="KEGG" id="cbh:CLC_3399"/>
<dbReference type="KEGG" id="cbo:CBO3455"/>
<dbReference type="PATRIC" id="fig|413999.7.peg.3431"/>
<dbReference type="HOGENOM" id="CLU_103849_1_2_9"/>
<dbReference type="PRO" id="PR:A5I7I0"/>
<dbReference type="Proteomes" id="UP000001986">
    <property type="component" value="Chromosome"/>
</dbReference>
<dbReference type="GO" id="GO:0005829">
    <property type="term" value="C:cytosol"/>
    <property type="evidence" value="ECO:0000318"/>
    <property type="project" value="GO_Central"/>
</dbReference>
<dbReference type="GO" id="GO:0015935">
    <property type="term" value="C:small ribosomal subunit"/>
    <property type="evidence" value="ECO:0000318"/>
    <property type="project" value="GO_Central"/>
</dbReference>
<dbReference type="GO" id="GO:0019843">
    <property type="term" value="F:rRNA binding"/>
    <property type="evidence" value="ECO:0007669"/>
    <property type="project" value="UniProtKB-UniRule"/>
</dbReference>
<dbReference type="GO" id="GO:0003735">
    <property type="term" value="F:structural constituent of ribosome"/>
    <property type="evidence" value="ECO:0007669"/>
    <property type="project" value="InterPro"/>
</dbReference>
<dbReference type="GO" id="GO:0000049">
    <property type="term" value="F:tRNA binding"/>
    <property type="evidence" value="ECO:0007669"/>
    <property type="project" value="UniProtKB-UniRule"/>
</dbReference>
<dbReference type="GO" id="GO:0006412">
    <property type="term" value="P:translation"/>
    <property type="evidence" value="ECO:0007669"/>
    <property type="project" value="UniProtKB-UniRule"/>
</dbReference>
<dbReference type="FunFam" id="1.10.8.50:FF:000001">
    <property type="entry name" value="30S ribosomal protein S13"/>
    <property type="match status" value="1"/>
</dbReference>
<dbReference type="FunFam" id="4.10.910.10:FF:000001">
    <property type="entry name" value="30S ribosomal protein S13"/>
    <property type="match status" value="1"/>
</dbReference>
<dbReference type="Gene3D" id="1.10.8.50">
    <property type="match status" value="1"/>
</dbReference>
<dbReference type="Gene3D" id="4.10.910.10">
    <property type="entry name" value="30s ribosomal protein s13, domain 2"/>
    <property type="match status" value="1"/>
</dbReference>
<dbReference type="HAMAP" id="MF_01315">
    <property type="entry name" value="Ribosomal_uS13"/>
    <property type="match status" value="1"/>
</dbReference>
<dbReference type="InterPro" id="IPR027437">
    <property type="entry name" value="Rbsml_uS13_C"/>
</dbReference>
<dbReference type="InterPro" id="IPR001892">
    <property type="entry name" value="Ribosomal_uS13"/>
</dbReference>
<dbReference type="InterPro" id="IPR010979">
    <property type="entry name" value="Ribosomal_uS13-like_H2TH"/>
</dbReference>
<dbReference type="InterPro" id="IPR019980">
    <property type="entry name" value="Ribosomal_uS13_bac-type"/>
</dbReference>
<dbReference type="InterPro" id="IPR018269">
    <property type="entry name" value="Ribosomal_uS13_CS"/>
</dbReference>
<dbReference type="NCBIfam" id="TIGR03631">
    <property type="entry name" value="uS13_bact"/>
    <property type="match status" value="1"/>
</dbReference>
<dbReference type="PANTHER" id="PTHR10871">
    <property type="entry name" value="30S RIBOSOMAL PROTEIN S13/40S RIBOSOMAL PROTEIN S18"/>
    <property type="match status" value="1"/>
</dbReference>
<dbReference type="PANTHER" id="PTHR10871:SF1">
    <property type="entry name" value="SMALL RIBOSOMAL SUBUNIT PROTEIN US13M"/>
    <property type="match status" value="1"/>
</dbReference>
<dbReference type="Pfam" id="PF00416">
    <property type="entry name" value="Ribosomal_S13"/>
    <property type="match status" value="1"/>
</dbReference>
<dbReference type="PIRSF" id="PIRSF002134">
    <property type="entry name" value="Ribosomal_S13"/>
    <property type="match status" value="1"/>
</dbReference>
<dbReference type="SUPFAM" id="SSF46946">
    <property type="entry name" value="S13-like H2TH domain"/>
    <property type="match status" value="1"/>
</dbReference>
<dbReference type="PROSITE" id="PS00646">
    <property type="entry name" value="RIBOSOMAL_S13_1"/>
    <property type="match status" value="1"/>
</dbReference>
<dbReference type="PROSITE" id="PS50159">
    <property type="entry name" value="RIBOSOMAL_S13_2"/>
    <property type="match status" value="1"/>
</dbReference>
<accession>A5I7I0</accession>
<accession>A7G8R2</accession>
<gene>
    <name evidence="1" type="primary">rpsM</name>
    <name type="ordered locus">CBO3455</name>
    <name type="ordered locus">CLC_3399</name>
</gene>
<protein>
    <recommendedName>
        <fullName evidence="1">Small ribosomal subunit protein uS13</fullName>
    </recommendedName>
    <alternativeName>
        <fullName evidence="3">30S ribosomal protein S13</fullName>
    </alternativeName>
</protein>
<feature type="chain" id="PRO_1000051878" description="Small ribosomal subunit protein uS13">
    <location>
        <begin position="1"/>
        <end position="123"/>
    </location>
</feature>
<feature type="region of interest" description="Disordered" evidence="2">
    <location>
        <begin position="93"/>
        <end position="123"/>
    </location>
</feature>
<sequence length="123" mass="13975">MARISGIDLPKEKRVEIGLTYIYGIGLPTSQEILKATGVNPDTRVKDLSEEEVNAIRDYVNKNVKVEGDLRREIKLNIKRLVEIGSYRGIRHRRNLPVRGQKTKTNARTRKGPKRAIGGKKKK</sequence>
<proteinExistence type="inferred from homology"/>
<comment type="function">
    <text evidence="1">Located at the top of the head of the 30S subunit, it contacts several helices of the 16S rRNA. In the 70S ribosome it contacts the 23S rRNA (bridge B1a) and protein L5 of the 50S subunit (bridge B1b), connecting the 2 subunits; these bridges are implicated in subunit movement. Contacts the tRNAs in the A and P-sites.</text>
</comment>
<comment type="subunit">
    <text evidence="1">Part of the 30S ribosomal subunit. Forms a loose heterodimer with protein S19. Forms two bridges to the 50S subunit in the 70S ribosome.</text>
</comment>
<comment type="similarity">
    <text evidence="1">Belongs to the universal ribosomal protein uS13 family.</text>
</comment>
<reference key="1">
    <citation type="journal article" date="2007" name="Genome Res.">
        <title>Genome sequence of a proteolytic (Group I) Clostridium botulinum strain Hall A and comparative analysis of the clostridial genomes.</title>
        <authorList>
            <person name="Sebaihia M."/>
            <person name="Peck M.W."/>
            <person name="Minton N.P."/>
            <person name="Thomson N.R."/>
            <person name="Holden M.T.G."/>
            <person name="Mitchell W.J."/>
            <person name="Carter A.T."/>
            <person name="Bentley S.D."/>
            <person name="Mason D.R."/>
            <person name="Crossman L."/>
            <person name="Paul C.J."/>
            <person name="Ivens A."/>
            <person name="Wells-Bennik M.H.J."/>
            <person name="Davis I.J."/>
            <person name="Cerdeno-Tarraga A.M."/>
            <person name="Churcher C."/>
            <person name="Quail M.A."/>
            <person name="Chillingworth T."/>
            <person name="Feltwell T."/>
            <person name="Fraser A."/>
            <person name="Goodhead I."/>
            <person name="Hance Z."/>
            <person name="Jagels K."/>
            <person name="Larke N."/>
            <person name="Maddison M."/>
            <person name="Moule S."/>
            <person name="Mungall K."/>
            <person name="Norbertczak H."/>
            <person name="Rabbinowitsch E."/>
            <person name="Sanders M."/>
            <person name="Simmonds M."/>
            <person name="White B."/>
            <person name="Whithead S."/>
            <person name="Parkhill J."/>
        </authorList>
    </citation>
    <scope>NUCLEOTIDE SEQUENCE [LARGE SCALE GENOMIC DNA]</scope>
    <source>
        <strain>Hall / ATCC 3502 / NCTC 13319 / Type A</strain>
    </source>
</reference>
<reference key="2">
    <citation type="journal article" date="2007" name="PLoS ONE">
        <title>Analysis of the neurotoxin complex genes in Clostridium botulinum A1-A4 and B1 strains: BoNT/A3, /Ba4 and /B1 clusters are located within plasmids.</title>
        <authorList>
            <person name="Smith T.J."/>
            <person name="Hill K.K."/>
            <person name="Foley B.T."/>
            <person name="Detter J.C."/>
            <person name="Munk A.C."/>
            <person name="Bruce D.C."/>
            <person name="Doggett N.A."/>
            <person name="Smith L.A."/>
            <person name="Marks J.D."/>
            <person name="Xie G."/>
            <person name="Brettin T.S."/>
        </authorList>
    </citation>
    <scope>NUCLEOTIDE SEQUENCE [LARGE SCALE GENOMIC DNA]</scope>
    <source>
        <strain>Hall / ATCC 3502 / NCTC 13319 / Type A</strain>
    </source>
</reference>
<keyword id="KW-1185">Reference proteome</keyword>
<keyword id="KW-0687">Ribonucleoprotein</keyword>
<keyword id="KW-0689">Ribosomal protein</keyword>
<keyword id="KW-0694">RNA-binding</keyword>
<keyword id="KW-0699">rRNA-binding</keyword>
<keyword id="KW-0820">tRNA-binding</keyword>
<organism>
    <name type="scientific">Clostridium botulinum (strain Hall / ATCC 3502 / NCTC 13319 / Type A)</name>
    <dbReference type="NCBI Taxonomy" id="441771"/>
    <lineage>
        <taxon>Bacteria</taxon>
        <taxon>Bacillati</taxon>
        <taxon>Bacillota</taxon>
        <taxon>Clostridia</taxon>
        <taxon>Eubacteriales</taxon>
        <taxon>Clostridiaceae</taxon>
        <taxon>Clostridium</taxon>
    </lineage>
</organism>
<name>RS13_CLOBH</name>
<evidence type="ECO:0000255" key="1">
    <source>
        <dbReference type="HAMAP-Rule" id="MF_01315"/>
    </source>
</evidence>
<evidence type="ECO:0000256" key="2">
    <source>
        <dbReference type="SAM" id="MobiDB-lite"/>
    </source>
</evidence>
<evidence type="ECO:0000305" key="3"/>